<dbReference type="EMBL" id="BA000040">
    <property type="protein sequence ID" value="BAC46724.1"/>
    <property type="molecule type" value="Genomic_DNA"/>
</dbReference>
<dbReference type="RefSeq" id="NP_768099.1">
    <property type="nucleotide sequence ID" value="NC_004463.1"/>
</dbReference>
<dbReference type="RefSeq" id="WP_011084275.1">
    <property type="nucleotide sequence ID" value="NC_004463.1"/>
</dbReference>
<dbReference type="SMR" id="Q89UF8"/>
<dbReference type="STRING" id="224911.AAV28_04245"/>
<dbReference type="EnsemblBacteria" id="BAC46724">
    <property type="protein sequence ID" value="BAC46724"/>
    <property type="gene ID" value="BAC46724"/>
</dbReference>
<dbReference type="GeneID" id="46488736"/>
<dbReference type="KEGG" id="bja:blr1459"/>
<dbReference type="PATRIC" id="fig|224911.5.peg.1519"/>
<dbReference type="eggNOG" id="COG0830">
    <property type="taxonomic scope" value="Bacteria"/>
</dbReference>
<dbReference type="HOGENOM" id="CLU_049215_2_0_5"/>
<dbReference type="InParanoid" id="Q89UF8"/>
<dbReference type="OrthoDB" id="9798772at2"/>
<dbReference type="PhylomeDB" id="Q89UF8"/>
<dbReference type="Proteomes" id="UP000002526">
    <property type="component" value="Chromosome"/>
</dbReference>
<dbReference type="GO" id="GO:0005737">
    <property type="term" value="C:cytoplasm"/>
    <property type="evidence" value="ECO:0007669"/>
    <property type="project" value="UniProtKB-SubCell"/>
</dbReference>
<dbReference type="GO" id="GO:0016151">
    <property type="term" value="F:nickel cation binding"/>
    <property type="evidence" value="ECO:0007669"/>
    <property type="project" value="UniProtKB-UniRule"/>
</dbReference>
<dbReference type="Gene3D" id="1.10.4190.10">
    <property type="entry name" value="Urease accessory protein UreF"/>
    <property type="match status" value="1"/>
</dbReference>
<dbReference type="HAMAP" id="MF_01385">
    <property type="entry name" value="UreF"/>
    <property type="match status" value="1"/>
</dbReference>
<dbReference type="InterPro" id="IPR002639">
    <property type="entry name" value="UreF"/>
</dbReference>
<dbReference type="InterPro" id="IPR038277">
    <property type="entry name" value="UreF_sf"/>
</dbReference>
<dbReference type="PANTHER" id="PTHR33620">
    <property type="entry name" value="UREASE ACCESSORY PROTEIN F"/>
    <property type="match status" value="1"/>
</dbReference>
<dbReference type="PANTHER" id="PTHR33620:SF1">
    <property type="entry name" value="UREASE ACCESSORY PROTEIN F"/>
    <property type="match status" value="1"/>
</dbReference>
<dbReference type="Pfam" id="PF01730">
    <property type="entry name" value="UreF"/>
    <property type="match status" value="1"/>
</dbReference>
<dbReference type="PIRSF" id="PIRSF009467">
    <property type="entry name" value="Ureas_acces_UreF"/>
    <property type="match status" value="1"/>
</dbReference>
<comment type="function">
    <text evidence="1">Required for maturation of urease via the functional incorporation of the urease nickel metallocenter.</text>
</comment>
<comment type="subunit">
    <text evidence="1">UreD, UreF and UreG form a complex that acts as a GTP-hydrolysis-dependent molecular chaperone, activating the urease apoprotein by helping to assemble the nickel containing metallocenter of UreC. The UreE protein probably delivers the nickel.</text>
</comment>
<comment type="subcellular location">
    <subcellularLocation>
        <location evidence="1">Cytoplasm</location>
    </subcellularLocation>
</comment>
<comment type="similarity">
    <text evidence="1">Belongs to the UreF family.</text>
</comment>
<reference key="1">
    <citation type="journal article" date="2002" name="DNA Res.">
        <title>Complete genomic sequence of nitrogen-fixing symbiotic bacterium Bradyrhizobium japonicum USDA110.</title>
        <authorList>
            <person name="Kaneko T."/>
            <person name="Nakamura Y."/>
            <person name="Sato S."/>
            <person name="Minamisawa K."/>
            <person name="Uchiumi T."/>
            <person name="Sasamoto S."/>
            <person name="Watanabe A."/>
            <person name="Idesawa K."/>
            <person name="Iriguchi M."/>
            <person name="Kawashima K."/>
            <person name="Kohara M."/>
            <person name="Matsumoto M."/>
            <person name="Shimpo S."/>
            <person name="Tsuruoka H."/>
            <person name="Wada T."/>
            <person name="Yamada M."/>
            <person name="Tabata S."/>
        </authorList>
    </citation>
    <scope>NUCLEOTIDE SEQUENCE [LARGE SCALE GENOMIC DNA]</scope>
    <source>
        <strain>JCM 10833 / BCRC 13528 / IAM 13628 / NBRC 14792 / USDA 110</strain>
    </source>
</reference>
<proteinExistence type="inferred from homology"/>
<sequence length="242" mass="25796">MLMTTNEPVNAGDLAAREAAALYRLMTWLSPAFPVGGFSYSSGIEWAVEAGDITDTATLADWLDTMLGDGSGFCDATFLVQAYRATEAGEETSLRDIAELASAFVPSRERQLETTSQGRAFIDIARAAWDAEGLDAMVAACRTPLVYPVAVGVVAAMHGVPLAPTLHAFLHAVVSNWISAASRLIPLGQTDSQRVLVRLEAAVAATATRALSATLDDLGSATFRADLASLRHETQYTRLFRS</sequence>
<accession>Q89UF8</accession>
<protein>
    <recommendedName>
        <fullName evidence="1">Urease accessory protein UreF</fullName>
    </recommendedName>
</protein>
<organism>
    <name type="scientific">Bradyrhizobium diazoefficiens (strain JCM 10833 / BCRC 13528 / IAM 13628 / NBRC 14792 / USDA 110)</name>
    <dbReference type="NCBI Taxonomy" id="224911"/>
    <lineage>
        <taxon>Bacteria</taxon>
        <taxon>Pseudomonadati</taxon>
        <taxon>Pseudomonadota</taxon>
        <taxon>Alphaproteobacteria</taxon>
        <taxon>Hyphomicrobiales</taxon>
        <taxon>Nitrobacteraceae</taxon>
        <taxon>Bradyrhizobium</taxon>
    </lineage>
</organism>
<name>UREF_BRADU</name>
<evidence type="ECO:0000255" key="1">
    <source>
        <dbReference type="HAMAP-Rule" id="MF_01385"/>
    </source>
</evidence>
<keyword id="KW-0143">Chaperone</keyword>
<keyword id="KW-0963">Cytoplasm</keyword>
<keyword id="KW-0996">Nickel insertion</keyword>
<keyword id="KW-1185">Reference proteome</keyword>
<feature type="chain" id="PRO_0000344080" description="Urease accessory protein UreF">
    <location>
        <begin position="1"/>
        <end position="242"/>
    </location>
</feature>
<gene>
    <name evidence="1" type="primary">ureF</name>
    <name type="ordered locus">blr1459</name>
</gene>